<sequence length="36" mass="3940">MIASYLPSILVPLVGLVFPAIAMASLFLYIEQEEIS</sequence>
<dbReference type="EMBL" id="AF166114">
    <property type="protein sequence ID" value="AAF43846.1"/>
    <property type="molecule type" value="Genomic_DNA"/>
</dbReference>
<dbReference type="RefSeq" id="NP_038406.1">
    <property type="nucleotide sequence ID" value="NC_002186.1"/>
</dbReference>
<dbReference type="SMR" id="Q9MUQ4"/>
<dbReference type="GeneID" id="800938"/>
<dbReference type="GO" id="GO:0009535">
    <property type="term" value="C:chloroplast thylakoid membrane"/>
    <property type="evidence" value="ECO:0007669"/>
    <property type="project" value="UniProtKB-SubCell"/>
</dbReference>
<dbReference type="GO" id="GO:0009522">
    <property type="term" value="C:photosystem I"/>
    <property type="evidence" value="ECO:0007669"/>
    <property type="project" value="UniProtKB-KW"/>
</dbReference>
<dbReference type="GO" id="GO:0015979">
    <property type="term" value="P:photosynthesis"/>
    <property type="evidence" value="ECO:0007669"/>
    <property type="project" value="UniProtKB-UniRule"/>
</dbReference>
<dbReference type="HAMAP" id="MF_00431">
    <property type="entry name" value="PSI_PsaI"/>
    <property type="match status" value="1"/>
</dbReference>
<dbReference type="InterPro" id="IPR001302">
    <property type="entry name" value="PSI_PsaI"/>
</dbReference>
<dbReference type="InterPro" id="IPR036357">
    <property type="entry name" value="PSI_PsaI_sf"/>
</dbReference>
<dbReference type="NCBIfam" id="NF008830">
    <property type="entry name" value="PRK11877.1"/>
    <property type="match status" value="1"/>
</dbReference>
<dbReference type="NCBIfam" id="TIGR03052">
    <property type="entry name" value="PS_I_psaI"/>
    <property type="match status" value="1"/>
</dbReference>
<dbReference type="PANTHER" id="PTHR35775">
    <property type="match status" value="1"/>
</dbReference>
<dbReference type="PANTHER" id="PTHR35775:SF2">
    <property type="entry name" value="PHOTOSYSTEM I REACTION CENTER SUBUNIT VIII"/>
    <property type="match status" value="1"/>
</dbReference>
<dbReference type="Pfam" id="PF00796">
    <property type="entry name" value="PSI_8"/>
    <property type="match status" value="1"/>
</dbReference>
<dbReference type="SUPFAM" id="SSF81540">
    <property type="entry name" value="Subunit VIII of photosystem I reaction centre, PsaI"/>
    <property type="match status" value="1"/>
</dbReference>
<proteinExistence type="inferred from homology"/>
<comment type="function">
    <text evidence="1">May help in the organization of the PsaL subunit.</text>
</comment>
<comment type="subcellular location">
    <subcellularLocation>
        <location evidence="1">Plastid</location>
        <location evidence="1">Chloroplast thylakoid membrane</location>
        <topology evidence="1">Single-pass membrane protein</topology>
    </subcellularLocation>
</comment>
<comment type="similarity">
    <text evidence="3">Belongs to the PsaI family.</text>
</comment>
<gene>
    <name type="primary">psaI</name>
</gene>
<feature type="chain" id="PRO_0000194660" description="Photosystem I reaction center subunit VIII">
    <location>
        <begin position="1"/>
        <end position="36"/>
    </location>
</feature>
<feature type="transmembrane region" description="Helical" evidence="2">
    <location>
        <begin position="10"/>
        <end position="30"/>
    </location>
</feature>
<keyword id="KW-0150">Chloroplast</keyword>
<keyword id="KW-0472">Membrane</keyword>
<keyword id="KW-0602">Photosynthesis</keyword>
<keyword id="KW-0603">Photosystem I</keyword>
<keyword id="KW-0934">Plastid</keyword>
<keyword id="KW-0793">Thylakoid</keyword>
<keyword id="KW-0812">Transmembrane</keyword>
<keyword id="KW-1133">Transmembrane helix</keyword>
<reference key="1">
    <citation type="journal article" date="2000" name="Nature">
        <title>Ancestral chloroplast genome in Mesostigma viride reveals an early branch of green plant evolution.</title>
        <authorList>
            <person name="Lemieux C."/>
            <person name="Otis C."/>
            <person name="Turmel M."/>
        </authorList>
    </citation>
    <scope>NUCLEOTIDE SEQUENCE [LARGE SCALE GENOMIC DNA]</scope>
    <source>
        <strain>NIES-296 / KY-14 / CCMP 2046</strain>
    </source>
</reference>
<evidence type="ECO:0000250" key="1"/>
<evidence type="ECO:0000255" key="2"/>
<evidence type="ECO:0000305" key="3"/>
<protein>
    <recommendedName>
        <fullName>Photosystem I reaction center subunit VIII</fullName>
        <shortName>PSI-I</shortName>
    </recommendedName>
</protein>
<geneLocation type="chloroplast"/>
<accession>Q9MUQ4</accession>
<name>PSAI_MESVI</name>
<organism>
    <name type="scientific">Mesostigma viride</name>
    <name type="common">Green alga</name>
    <dbReference type="NCBI Taxonomy" id="41882"/>
    <lineage>
        <taxon>Eukaryota</taxon>
        <taxon>Viridiplantae</taxon>
        <taxon>Streptophyta</taxon>
        <taxon>Mesostigmatophyceae</taxon>
        <taxon>Mesostigmatales</taxon>
        <taxon>Mesostigmataceae</taxon>
        <taxon>Mesostigma</taxon>
    </lineage>
</organism>